<protein>
    <recommendedName>
        <fullName evidence="4">Beta-1,3-galactosyltransferase 1</fullName>
        <shortName>Beta-1,3-GalTase 1</shortName>
        <shortName>Beta3Gal-T1</shortName>
        <shortName>Beta3GalT1</shortName>
        <ecNumber evidence="3">2.4.1.86</ecNumber>
    </recommendedName>
    <alternativeName>
        <fullName>UDP-Gal:betaGlcNAc beta 1,3-galactosyltransferase-I</fullName>
    </alternativeName>
    <alternativeName>
        <fullName>UDP-galactose:beta-N-acetyl-glucosamine-beta-1,3-galactosyltransferase 1</fullName>
    </alternativeName>
</protein>
<gene>
    <name evidence="5" type="primary">B3galt1</name>
</gene>
<organism>
    <name type="scientific">Mus musculus</name>
    <name type="common">Mouse</name>
    <dbReference type="NCBI Taxonomy" id="10090"/>
    <lineage>
        <taxon>Eukaryota</taxon>
        <taxon>Metazoa</taxon>
        <taxon>Chordata</taxon>
        <taxon>Craniata</taxon>
        <taxon>Vertebrata</taxon>
        <taxon>Euteleostomi</taxon>
        <taxon>Mammalia</taxon>
        <taxon>Eutheria</taxon>
        <taxon>Euarchontoglires</taxon>
        <taxon>Glires</taxon>
        <taxon>Rodentia</taxon>
        <taxon>Myomorpha</taxon>
        <taxon>Muroidea</taxon>
        <taxon>Muridae</taxon>
        <taxon>Murinae</taxon>
        <taxon>Mus</taxon>
        <taxon>Mus</taxon>
    </lineage>
</organism>
<dbReference type="EC" id="2.4.1.86" evidence="3"/>
<dbReference type="EMBL" id="AF029790">
    <property type="protein sequence ID" value="AAC53523.1"/>
    <property type="molecule type" value="Genomic_DNA"/>
</dbReference>
<dbReference type="EMBL" id="AB039134">
    <property type="protein sequence ID" value="BAB68658.1"/>
    <property type="molecule type" value="Genomic_DNA"/>
</dbReference>
<dbReference type="EMBL" id="AB039135">
    <property type="protein sequence ID" value="BAB68659.1"/>
    <property type="molecule type" value="Genomic_DNA"/>
</dbReference>
<dbReference type="EMBL" id="AB039136">
    <property type="protein sequence ID" value="BAB68660.1"/>
    <property type="molecule type" value="Genomic_DNA"/>
</dbReference>
<dbReference type="EMBL" id="AB039137">
    <property type="protein sequence ID" value="BAB68661.1"/>
    <property type="molecule type" value="Genomic_DNA"/>
</dbReference>
<dbReference type="EMBL" id="AB039138">
    <property type="protein sequence ID" value="BAB68662.1"/>
    <property type="molecule type" value="Genomic_DNA"/>
</dbReference>
<dbReference type="EMBL" id="AB039139">
    <property type="protein sequence ID" value="BAB68663.1"/>
    <property type="molecule type" value="Genomic_DNA"/>
</dbReference>
<dbReference type="EMBL" id="AB039140">
    <property type="protein sequence ID" value="BAB68664.1"/>
    <property type="molecule type" value="Genomic_DNA"/>
</dbReference>
<dbReference type="EMBL" id="AB039141">
    <property type="protein sequence ID" value="BAB68665.1"/>
    <property type="molecule type" value="Genomic_DNA"/>
</dbReference>
<dbReference type="EMBL" id="AB039142">
    <property type="protein sequence ID" value="BAB68666.1"/>
    <property type="molecule type" value="Genomic_DNA"/>
</dbReference>
<dbReference type="CCDS" id="CCDS16083.1"/>
<dbReference type="RefSeq" id="NP_001366253.1">
    <property type="nucleotide sequence ID" value="NM_001379324.1"/>
</dbReference>
<dbReference type="RefSeq" id="NP_001366254.1">
    <property type="nucleotide sequence ID" value="NM_001379325.1"/>
</dbReference>
<dbReference type="RefSeq" id="NP_001366255.1">
    <property type="nucleotide sequence ID" value="NM_001379326.1"/>
</dbReference>
<dbReference type="RefSeq" id="NP_001366256.1">
    <property type="nucleotide sequence ID" value="NM_001379327.1"/>
</dbReference>
<dbReference type="RefSeq" id="NP_001366257.1">
    <property type="nucleotide sequence ID" value="NM_001379328.1"/>
</dbReference>
<dbReference type="RefSeq" id="NP_001366258.1">
    <property type="nucleotide sequence ID" value="NM_001379329.1"/>
</dbReference>
<dbReference type="RefSeq" id="NP_001399338.1">
    <property type="nucleotide sequence ID" value="NM_001412409.1"/>
</dbReference>
<dbReference type="RefSeq" id="NP_001399339.1">
    <property type="nucleotide sequence ID" value="NM_001412410.1"/>
</dbReference>
<dbReference type="RefSeq" id="NP_064679.2">
    <property type="nucleotide sequence ID" value="NM_020283.4"/>
</dbReference>
<dbReference type="RefSeq" id="XP_006499654.1">
    <property type="nucleotide sequence ID" value="XM_006499591.3"/>
</dbReference>
<dbReference type="RefSeq" id="XP_011237873.1">
    <property type="nucleotide sequence ID" value="XM_011239571.2"/>
</dbReference>
<dbReference type="RefSeq" id="XP_011237874.1">
    <property type="nucleotide sequence ID" value="XM_011239572.2"/>
</dbReference>
<dbReference type="RefSeq" id="XP_011237875.1">
    <property type="nucleotide sequence ID" value="XM_011239573.2"/>
</dbReference>
<dbReference type="RefSeq" id="XP_017174164.1">
    <property type="nucleotide sequence ID" value="XM_017318675.1"/>
</dbReference>
<dbReference type="RefSeq" id="XP_036018121.1">
    <property type="nucleotide sequence ID" value="XM_036162228.1"/>
</dbReference>
<dbReference type="RefSeq" id="XP_036018122.1">
    <property type="nucleotide sequence ID" value="XM_036162229.1"/>
</dbReference>
<dbReference type="RefSeq" id="XP_036018123.1">
    <property type="nucleotide sequence ID" value="XM_036162230.1"/>
</dbReference>
<dbReference type="SMR" id="O54904"/>
<dbReference type="FunCoup" id="O54904">
    <property type="interactions" value="276"/>
</dbReference>
<dbReference type="STRING" id="10090.ENSMUSP00000107965"/>
<dbReference type="CAZy" id="GT31">
    <property type="family name" value="Glycosyltransferase Family 31"/>
</dbReference>
<dbReference type="GlyCosmos" id="O54904">
    <property type="glycosylation" value="2 sites, No reported glycans"/>
</dbReference>
<dbReference type="GlyGen" id="O54904">
    <property type="glycosylation" value="2 sites, 1 N-linked glycan (1 site)"/>
</dbReference>
<dbReference type="PhosphoSitePlus" id="O54904"/>
<dbReference type="SwissPalm" id="O54904"/>
<dbReference type="PaxDb" id="10090-ENSMUSP00000107965"/>
<dbReference type="ProteomicsDB" id="265192"/>
<dbReference type="Antibodypedia" id="33791">
    <property type="antibodies" value="90 antibodies from 20 providers"/>
</dbReference>
<dbReference type="DNASU" id="26877"/>
<dbReference type="Ensembl" id="ENSMUST00000042456.4">
    <property type="protein sequence ID" value="ENSMUSP00000041343.4"/>
    <property type="gene ID" value="ENSMUSG00000034780.7"/>
</dbReference>
<dbReference type="Ensembl" id="ENSMUST00000112346.3">
    <property type="protein sequence ID" value="ENSMUSP00000107965.3"/>
    <property type="gene ID" value="ENSMUSG00000034780.7"/>
</dbReference>
<dbReference type="GeneID" id="26877"/>
<dbReference type="KEGG" id="mmu:26877"/>
<dbReference type="UCSC" id="uc008jxm.3">
    <property type="organism name" value="mouse"/>
</dbReference>
<dbReference type="AGR" id="MGI:1349403"/>
<dbReference type="CTD" id="8708"/>
<dbReference type="MGI" id="MGI:1349403">
    <property type="gene designation" value="B3galt1"/>
</dbReference>
<dbReference type="VEuPathDB" id="HostDB:ENSMUSG00000034780"/>
<dbReference type="eggNOG" id="KOG2287">
    <property type="taxonomic scope" value="Eukaryota"/>
</dbReference>
<dbReference type="GeneTree" id="ENSGT00940000156219"/>
<dbReference type="HOGENOM" id="CLU_036849_2_4_1"/>
<dbReference type="InParanoid" id="O54904"/>
<dbReference type="OMA" id="MPRDVYP"/>
<dbReference type="OrthoDB" id="5957813at2759"/>
<dbReference type="PhylomeDB" id="O54904"/>
<dbReference type="TreeFam" id="TF318639"/>
<dbReference type="Reactome" id="R-MMU-9037629">
    <property type="pathway name" value="Lewis blood group biosynthesis"/>
</dbReference>
<dbReference type="UniPathway" id="UPA00378"/>
<dbReference type="BioGRID-ORCS" id="26877">
    <property type="hits" value="0 hits in 81 CRISPR screens"/>
</dbReference>
<dbReference type="ChiTaRS" id="B3galt1">
    <property type="organism name" value="mouse"/>
</dbReference>
<dbReference type="PRO" id="PR:O54904"/>
<dbReference type="Proteomes" id="UP000000589">
    <property type="component" value="Chromosome 2"/>
</dbReference>
<dbReference type="RNAct" id="O54904">
    <property type="molecule type" value="protein"/>
</dbReference>
<dbReference type="Bgee" id="ENSMUSG00000034780">
    <property type="expression patterns" value="Expressed in cortical plate and 178 other cell types or tissues"/>
</dbReference>
<dbReference type="ExpressionAtlas" id="O54904">
    <property type="expression patterns" value="baseline and differential"/>
</dbReference>
<dbReference type="GO" id="GO:0000139">
    <property type="term" value="C:Golgi membrane"/>
    <property type="evidence" value="ECO:0000314"/>
    <property type="project" value="MGI"/>
</dbReference>
<dbReference type="GO" id="GO:0008499">
    <property type="term" value="F:N-acetyl-beta-D-glucosaminide beta-(1,3)-galactosyltransferase activity"/>
    <property type="evidence" value="ECO:0000314"/>
    <property type="project" value="MGI"/>
</dbReference>
<dbReference type="GO" id="GO:0006682">
    <property type="term" value="P:galactosylceramide biosynthetic process"/>
    <property type="evidence" value="ECO:0007669"/>
    <property type="project" value="Ensembl"/>
</dbReference>
<dbReference type="GO" id="GO:0030259">
    <property type="term" value="P:lipid glycosylation"/>
    <property type="evidence" value="ECO:0007669"/>
    <property type="project" value="Ensembl"/>
</dbReference>
<dbReference type="GO" id="GO:0009312">
    <property type="term" value="P:oligosaccharide biosynthetic process"/>
    <property type="evidence" value="ECO:0000314"/>
    <property type="project" value="MGI"/>
</dbReference>
<dbReference type="GO" id="GO:0006486">
    <property type="term" value="P:protein glycosylation"/>
    <property type="evidence" value="ECO:0007669"/>
    <property type="project" value="UniProtKB-UniPathway"/>
</dbReference>
<dbReference type="FunFam" id="3.90.550.50:FF:000001">
    <property type="entry name" value="Hexosyltransferase"/>
    <property type="match status" value="1"/>
</dbReference>
<dbReference type="Gene3D" id="3.90.550.50">
    <property type="match status" value="1"/>
</dbReference>
<dbReference type="InterPro" id="IPR002659">
    <property type="entry name" value="Glyco_trans_31"/>
</dbReference>
<dbReference type="InterPro" id="IPR029044">
    <property type="entry name" value="Nucleotide-diphossugar_trans"/>
</dbReference>
<dbReference type="PANTHER" id="PTHR11214:SF20">
    <property type="entry name" value="BETA-1,3-GALACTOSYLTRANSFERASE 1"/>
    <property type="match status" value="1"/>
</dbReference>
<dbReference type="PANTHER" id="PTHR11214">
    <property type="entry name" value="BETA-1,3-N-ACETYLGLUCOSAMINYLTRANSFERASE"/>
    <property type="match status" value="1"/>
</dbReference>
<dbReference type="Pfam" id="PF01762">
    <property type="entry name" value="Galactosyl_T"/>
    <property type="match status" value="1"/>
</dbReference>
<dbReference type="SUPFAM" id="SSF53448">
    <property type="entry name" value="Nucleotide-diphospho-sugar transferases"/>
    <property type="match status" value="1"/>
</dbReference>
<feature type="chain" id="PRO_0000219146" description="Beta-1,3-galactosyltransferase 1">
    <location>
        <begin position="1"/>
        <end position="326"/>
    </location>
</feature>
<feature type="topological domain" description="Cytoplasmic" evidence="2">
    <location>
        <begin position="1"/>
        <end position="6"/>
    </location>
</feature>
<feature type="transmembrane region" description="Helical; Signal-anchor for type II membrane protein" evidence="2">
    <location>
        <begin position="7"/>
        <end position="26"/>
    </location>
</feature>
<feature type="topological domain" description="Lumenal" evidence="2">
    <location>
        <begin position="27"/>
        <end position="326"/>
    </location>
</feature>
<feature type="glycosylation site" description="N-linked (GlcNAc...) asparagine" evidence="2">
    <location>
        <position position="47"/>
    </location>
</feature>
<feature type="glycosylation site" description="N-linked (GlcNAc...) asparagine" evidence="2">
    <location>
        <position position="151"/>
    </location>
</feature>
<feature type="sequence variant" description="In strain: 129/SvJ." evidence="3">
    <original>T</original>
    <variation>S</variation>
    <location>
        <position position="12"/>
    </location>
</feature>
<keyword id="KW-0325">Glycoprotein</keyword>
<keyword id="KW-0328">Glycosyltransferase</keyword>
<keyword id="KW-0333">Golgi apparatus</keyword>
<keyword id="KW-0443">Lipid metabolism</keyword>
<keyword id="KW-0464">Manganese</keyword>
<keyword id="KW-0472">Membrane</keyword>
<keyword id="KW-1185">Reference proteome</keyword>
<keyword id="KW-0735">Signal-anchor</keyword>
<keyword id="KW-0808">Transferase</keyword>
<keyword id="KW-0812">Transmembrane</keyword>
<keyword id="KW-1133">Transmembrane helix</keyword>
<name>B3GT1_MOUSE</name>
<reference key="1">
    <citation type="journal article" date="1998" name="J. Biol. Chem.">
        <title>Genomic cloning and expression of three murine UDP-galactose: beta-N-acetylglucosamine beta1,3-galactosyltransferase genes.</title>
        <authorList>
            <person name="Hennet T."/>
            <person name="Dinter A."/>
            <person name="Kuhnert P."/>
            <person name="Mattu T.S."/>
            <person name="Rudd P.M."/>
            <person name="Berger E.G."/>
        </authorList>
    </citation>
    <scope>NUCLEOTIDE SEQUENCE [GENOMIC DNA]</scope>
    <scope>VARIANT SER-12</scope>
    <scope>FUNCTION</scope>
    <scope>CATALYTIC ACTIVITY</scope>
    <scope>COFACTOR</scope>
    <scope>TISSUE SPECIFICITY</scope>
    <scope>BIOPHYSICOCHEMICAL PROPERTIES</scope>
    <source>
        <strain>129/SvJ</strain>
    </source>
</reference>
<reference key="2">
    <citation type="submission" date="2000-02" db="EMBL/GenBank/DDBJ databases">
        <title>Conspicuous differences among gene genealogies of 21 nuclear genes of five Mus musculus subspecies.</title>
        <authorList>
            <person name="Liu Y."/>
            <person name="Kitano T."/>
            <person name="Koide T."/>
            <person name="Shiroishi T."/>
            <person name="Moriwaki K."/>
            <person name="Saitou N."/>
        </authorList>
    </citation>
    <scope>NUCLEOTIDE SEQUENCE [GENOMIC DNA] OF 12-316</scope>
    <source>
        <strain>BFM/2Msf</strain>
        <strain>BLG2/Msf</strain>
        <strain>C57BL/10SnJ</strain>
        <strain>CAST/EiJ</strain>
        <strain>HMI/Msf</strain>
        <strain>MSM/Msf</strain>
        <strain>NJL/Msf</strain>
        <strain>Pgn2</strain>
        <strain>SWN/Msf</strain>
    </source>
</reference>
<sequence length="326" mass="37993">MASKVSCLYVLTVVCWASALWYLSITRPTSSYTGSKPFSHLTVARKNFTFGNIRTRPINPHSFEFLINEPNKCEKNIPFLVILISTTHKEFDARQAIRETWGDENNFKGIKIATLFLLGKNADPVLNQMVEQESQIFHDIIVEDFIDSYHNLTLKTLMGMRWVATFCSKAKYVMKTDSDIFVNMDNLIYKLLKPSTKPRRRYFTGYVINGGPIRDVRSKWYMPRDLYPDSNYPPFCSGTGYIFSADVAELIYKTSLHTRLLHLEDVYVGLCLRKLGIHPFQNSGFNHWKMAYSLCRYRRVITVHQISPEEMHRIWNDMSSKKHLRC</sequence>
<comment type="function">
    <text evidence="3">Beta-1,3-galactosyltransferase that transfers galactose from UDP-alpha-D-galactose to substrates with a terminal beta-N-acetylglucosamine (beta-GlcNAc) residue. Involved in the biosynthesis of the carbohydrate moieties of glycolipids and glycoproteins.</text>
</comment>
<comment type="catalytic activity">
    <reaction evidence="3">
        <text>an N-acetyl-beta-D-glucosaminyl derivative + UDP-alpha-D-galactose = a beta-D-galactosyl-(1-&gt;3)-N-acetyl-beta-D-glucosaminyl derivative + UDP + H(+)</text>
        <dbReference type="Rhea" id="RHEA:53432"/>
        <dbReference type="ChEBI" id="CHEBI:15378"/>
        <dbReference type="ChEBI" id="CHEBI:58223"/>
        <dbReference type="ChEBI" id="CHEBI:61631"/>
        <dbReference type="ChEBI" id="CHEBI:66914"/>
        <dbReference type="ChEBI" id="CHEBI:133506"/>
        <dbReference type="EC" id="2.4.1.86"/>
    </reaction>
    <physiologicalReaction direction="left-to-right" evidence="3">
        <dbReference type="Rhea" id="RHEA:53433"/>
    </physiologicalReaction>
</comment>
<comment type="catalytic activity">
    <reaction evidence="1">
        <text>a beta-D-GlcNAc-(1-&gt;3)-beta-D-Gal-(1-&gt;4)-beta-D-Glc-(1&lt;-&gt;1)-Cer(d18:1(4E)) + UDP-alpha-D-galactose = a beta-D-Gal-(1-&gt;3)-beta-D-GlcNAc-(1-&gt;3)-beta-D-Gal-(1-&gt;4)-beta-D-Glc-(1&lt;-&gt;1')-Cer(d18:1(4E)) + UDP + H(+)</text>
        <dbReference type="Rhea" id="RHEA:16045"/>
        <dbReference type="ChEBI" id="CHEBI:15378"/>
        <dbReference type="ChEBI" id="CHEBI:17103"/>
        <dbReference type="ChEBI" id="CHEBI:17292"/>
        <dbReference type="ChEBI" id="CHEBI:58223"/>
        <dbReference type="ChEBI" id="CHEBI:66914"/>
        <dbReference type="EC" id="2.4.1.86"/>
    </reaction>
    <physiologicalReaction direction="left-to-right" evidence="1">
        <dbReference type="Rhea" id="RHEA:16046"/>
    </physiologicalReaction>
</comment>
<comment type="cofactor">
    <cofactor evidence="3">
        <name>Mn(2+)</name>
        <dbReference type="ChEBI" id="CHEBI:29035"/>
    </cofactor>
</comment>
<comment type="biophysicochemical properties">
    <kinetics>
        <KM evidence="3">2.3 mM for UDP-alpha-D-galactose</KM>
        <KM evidence="3">11.8 mM for GlcNAc-beta-pNP</KM>
    </kinetics>
</comment>
<comment type="pathway">
    <text>Protein modification; protein glycosylation.</text>
</comment>
<comment type="subcellular location">
    <subcellularLocation>
        <location evidence="4">Golgi apparatus membrane</location>
        <topology evidence="4">Single-pass type II membrane protein</topology>
    </subcellularLocation>
</comment>
<comment type="tissue specificity">
    <text evidence="3">Ubiquitous.</text>
</comment>
<comment type="similarity">
    <text evidence="4">Belongs to the glycosyltransferase 31 family.</text>
</comment>
<comment type="online information" name="Functional Glycomics Gateway - GTase">
    <link uri="http://www.functionalglycomics.org/glycomics/search/jsp/landing.jsp?query=gt_mou_454"/>
    <text>b3GalT1</text>
</comment>
<accession>O54904</accession>
<accession>Q91V52</accession>
<proteinExistence type="evidence at protein level"/>
<evidence type="ECO:0000250" key="1">
    <source>
        <dbReference type="UniProtKB" id="Q9Y5Z6"/>
    </source>
</evidence>
<evidence type="ECO:0000255" key="2"/>
<evidence type="ECO:0000269" key="3">
    <source>
    </source>
</evidence>
<evidence type="ECO:0000305" key="4"/>
<evidence type="ECO:0000312" key="5">
    <source>
        <dbReference type="MGI" id="MGI:1349403"/>
    </source>
</evidence>